<sequence>MSGELSSICGGLPPELCEQLAREQQIIKIKLEKRRYGREVTIIEGLDEREVNLKKLASELKSRLATGGTYKNGRIELQGDHRHRVKEILVEMGFPEENIIIVE</sequence>
<feature type="chain" id="PRO_1000006428" description="Protein translation factor SUI1 homolog">
    <location>
        <begin position="1"/>
        <end position="103"/>
    </location>
</feature>
<dbReference type="EMBL" id="CP000493">
    <property type="protein sequence ID" value="ABM79931.1"/>
    <property type="molecule type" value="Genomic_DNA"/>
</dbReference>
<dbReference type="RefSeq" id="WP_011821248.1">
    <property type="nucleotide sequence ID" value="NC_008818.1"/>
</dbReference>
<dbReference type="SMR" id="A2BIX0"/>
<dbReference type="STRING" id="415426.Hbut_0053"/>
<dbReference type="EnsemblBacteria" id="ABM79931">
    <property type="protein sequence ID" value="ABM79931"/>
    <property type="gene ID" value="Hbut_0053"/>
</dbReference>
<dbReference type="GeneID" id="4782117"/>
<dbReference type="KEGG" id="hbu:Hbut_0053"/>
<dbReference type="eggNOG" id="arCOG04223">
    <property type="taxonomic scope" value="Archaea"/>
</dbReference>
<dbReference type="HOGENOM" id="CLU_082805_6_1_2"/>
<dbReference type="OrthoDB" id="11182at2157"/>
<dbReference type="Proteomes" id="UP000002593">
    <property type="component" value="Chromosome"/>
</dbReference>
<dbReference type="GO" id="GO:0003729">
    <property type="term" value="F:mRNA binding"/>
    <property type="evidence" value="ECO:0007669"/>
    <property type="project" value="TreeGrafter"/>
</dbReference>
<dbReference type="GO" id="GO:0003743">
    <property type="term" value="F:translation initiation factor activity"/>
    <property type="evidence" value="ECO:0007669"/>
    <property type="project" value="InterPro"/>
</dbReference>
<dbReference type="GO" id="GO:0001731">
    <property type="term" value="P:formation of translation preinitiation complex"/>
    <property type="evidence" value="ECO:0007669"/>
    <property type="project" value="TreeGrafter"/>
</dbReference>
<dbReference type="GO" id="GO:0006417">
    <property type="term" value="P:regulation of translation"/>
    <property type="evidence" value="ECO:0007669"/>
    <property type="project" value="UniProtKB-UniRule"/>
</dbReference>
<dbReference type="GO" id="GO:0002188">
    <property type="term" value="P:translation reinitiation"/>
    <property type="evidence" value="ECO:0007669"/>
    <property type="project" value="TreeGrafter"/>
</dbReference>
<dbReference type="CDD" id="cd11567">
    <property type="entry name" value="YciH_like"/>
    <property type="match status" value="1"/>
</dbReference>
<dbReference type="Gene3D" id="3.30.780.10">
    <property type="entry name" value="SUI1-like domain"/>
    <property type="match status" value="1"/>
</dbReference>
<dbReference type="HAMAP" id="MF_00604">
    <property type="entry name" value="SUI1"/>
    <property type="match status" value="1"/>
</dbReference>
<dbReference type="InterPro" id="IPR050318">
    <property type="entry name" value="DENR/SUI1_TIF"/>
</dbReference>
<dbReference type="InterPro" id="IPR001950">
    <property type="entry name" value="SUI1"/>
</dbReference>
<dbReference type="InterPro" id="IPR022851">
    <property type="entry name" value="SUI1_arc"/>
</dbReference>
<dbReference type="InterPro" id="IPR005872">
    <property type="entry name" value="SUI1_arc_bac"/>
</dbReference>
<dbReference type="InterPro" id="IPR036877">
    <property type="entry name" value="SUI1_dom_sf"/>
</dbReference>
<dbReference type="NCBIfam" id="NF002096">
    <property type="entry name" value="PRK00939.1"/>
    <property type="match status" value="1"/>
</dbReference>
<dbReference type="NCBIfam" id="TIGR01158">
    <property type="entry name" value="SUI1_rel"/>
    <property type="match status" value="1"/>
</dbReference>
<dbReference type="PANTHER" id="PTHR12789:SF0">
    <property type="entry name" value="DENSITY-REGULATED PROTEIN"/>
    <property type="match status" value="1"/>
</dbReference>
<dbReference type="PANTHER" id="PTHR12789">
    <property type="entry name" value="DENSITY-REGULATED PROTEIN HOMOLOG"/>
    <property type="match status" value="1"/>
</dbReference>
<dbReference type="Pfam" id="PF01253">
    <property type="entry name" value="SUI1"/>
    <property type="match status" value="1"/>
</dbReference>
<dbReference type="PIRSF" id="PIRSF037511">
    <property type="entry name" value="Transl_init_SUI1_pro"/>
    <property type="match status" value="1"/>
</dbReference>
<dbReference type="SUPFAM" id="SSF55159">
    <property type="entry name" value="eIF1-like"/>
    <property type="match status" value="1"/>
</dbReference>
<dbReference type="PROSITE" id="PS50296">
    <property type="entry name" value="SUI1"/>
    <property type="match status" value="1"/>
</dbReference>
<accession>A2BIX0</accession>
<comment type="similarity">
    <text evidence="1">Belongs to the SUI1 family.</text>
</comment>
<gene>
    <name type="ordered locus">Hbut_0053</name>
</gene>
<reference key="1">
    <citation type="journal article" date="2007" name="Archaea">
        <title>The genome of Hyperthermus butylicus: a sulfur-reducing, peptide fermenting, neutrophilic Crenarchaeote growing up to 108 degrees C.</title>
        <authorList>
            <person name="Bruegger K."/>
            <person name="Chen L."/>
            <person name="Stark M."/>
            <person name="Zibat A."/>
            <person name="Redder P."/>
            <person name="Ruepp A."/>
            <person name="Awayez M."/>
            <person name="She Q."/>
            <person name="Garrett R.A."/>
            <person name="Klenk H.-P."/>
        </authorList>
    </citation>
    <scope>NUCLEOTIDE SEQUENCE [LARGE SCALE GENOMIC DNA]</scope>
    <source>
        <strain>DSM 5456 / JCM 9403 / PLM1-5</strain>
    </source>
</reference>
<name>SUI1_HYPBU</name>
<evidence type="ECO:0000255" key="1">
    <source>
        <dbReference type="HAMAP-Rule" id="MF_00604"/>
    </source>
</evidence>
<organism>
    <name type="scientific">Hyperthermus butylicus (strain DSM 5456 / JCM 9403 / PLM1-5)</name>
    <dbReference type="NCBI Taxonomy" id="415426"/>
    <lineage>
        <taxon>Archaea</taxon>
        <taxon>Thermoproteota</taxon>
        <taxon>Thermoprotei</taxon>
        <taxon>Desulfurococcales</taxon>
        <taxon>Pyrodictiaceae</taxon>
        <taxon>Hyperthermus</taxon>
    </lineage>
</organism>
<keyword id="KW-0648">Protein biosynthesis</keyword>
<keyword id="KW-1185">Reference proteome</keyword>
<keyword id="KW-0810">Translation regulation</keyword>
<protein>
    <recommendedName>
        <fullName evidence="1">Protein translation factor SUI1 homolog</fullName>
    </recommendedName>
</protein>
<proteinExistence type="inferred from homology"/>